<keyword id="KW-0037">Angiogenesis</keyword>
<keyword id="KW-0091">Biomineralization</keyword>
<keyword id="KW-0272">Extracellular matrix</keyword>
<keyword id="KW-0325">Glycoprotein</keyword>
<keyword id="KW-0495">Mineral balance</keyword>
<keyword id="KW-0892">Osteogenesis</keyword>
<keyword id="KW-0597">Phosphoprotein</keyword>
<keyword id="KW-1185">Reference proteome</keyword>
<keyword id="KW-0677">Repeat</keyword>
<keyword id="KW-0964">Secreted</keyword>
<keyword id="KW-0732">Signal</keyword>
<proteinExistence type="evidence at protein level"/>
<reference key="1">
    <citation type="journal article" date="2004" name="Genome Res.">
        <title>The status, quality, and expansion of the NIH full-length cDNA project: the Mammalian Gene Collection (MGC).</title>
        <authorList>
            <consortium name="The MGC Project Team"/>
        </authorList>
    </citation>
    <scope>NUCLEOTIDE SEQUENCE [LARGE SCALE MRNA]</scope>
    <source>
        <tissue>Heart</tissue>
    </source>
</reference>
<reference key="2">
    <citation type="submission" date="1995-12" db="EMBL/GenBank/DDBJ databases">
        <authorList>
            <person name="Csikos T."/>
            <person name="Gallinat S."/>
            <person name="Stoll M."/>
            <person name="Unger T."/>
        </authorList>
    </citation>
    <scope>NUCLEOTIDE SEQUENCE [MRNA] OF 261-325</scope>
    <source>
        <strain>Wistar Kyoto</strain>
        <tissue>Heart</tissue>
    </source>
</reference>
<reference key="3">
    <citation type="journal article" date="2012" name="Nat. Commun.">
        <title>Quantitative maps of protein phosphorylation sites across 14 different rat organs and tissues.</title>
        <authorList>
            <person name="Lundby A."/>
            <person name="Secher A."/>
            <person name="Lage K."/>
            <person name="Nordsborg N.B."/>
            <person name="Dmytriyev A."/>
            <person name="Lundby C."/>
            <person name="Olsen J.V."/>
        </authorList>
    </citation>
    <scope>PHOSPHORYLATION [LARGE SCALE ANALYSIS] AT SER-559</scope>
    <scope>IDENTIFICATION BY MASS SPECTROMETRY [LARGE SCALE ANALYSIS]</scope>
</reference>
<reference key="4">
    <citation type="journal article" date="2015" name="J. Proteome Res.">
        <title>Peptidomics for studying limited proteolysis.</title>
        <authorList>
            <person name="Tsuchiya T."/>
            <person name="Osaki T."/>
            <person name="Minamino N."/>
            <person name="Sasaki K."/>
        </authorList>
    </citation>
    <scope>CLEAVAGE OF SIGNAL PEPTIDE AFTER ALA-19</scope>
    <scope>IDENTIFICATION BY MASS SPECTROMETRY</scope>
</reference>
<evidence type="ECO:0000250" key="1"/>
<evidence type="ECO:0000255" key="2"/>
<evidence type="ECO:0000256" key="3">
    <source>
        <dbReference type="SAM" id="MobiDB-lite"/>
    </source>
</evidence>
<evidence type="ECO:0000269" key="4">
    <source>
    </source>
</evidence>
<evidence type="ECO:0007744" key="5">
    <source>
    </source>
</evidence>
<organism>
    <name type="scientific">Rattus norvegicus</name>
    <name type="common">Rat</name>
    <dbReference type="NCBI Taxonomy" id="10116"/>
    <lineage>
        <taxon>Eukaryota</taxon>
        <taxon>Metazoa</taxon>
        <taxon>Chordata</taxon>
        <taxon>Craniata</taxon>
        <taxon>Vertebrata</taxon>
        <taxon>Euteleostomi</taxon>
        <taxon>Mammalia</taxon>
        <taxon>Eutheria</taxon>
        <taxon>Euarchontoglires</taxon>
        <taxon>Glires</taxon>
        <taxon>Rodentia</taxon>
        <taxon>Myomorpha</taxon>
        <taxon>Muroidea</taxon>
        <taxon>Muridae</taxon>
        <taxon>Murinae</taxon>
        <taxon>Rattus</taxon>
    </lineage>
</organism>
<dbReference type="EMBL" id="BC085879">
    <property type="protein sequence ID" value="AAH85879.1"/>
    <property type="molecule type" value="mRNA"/>
</dbReference>
<dbReference type="EMBL" id="U42581">
    <property type="protein sequence ID" value="AAA84385.1"/>
    <property type="molecule type" value="mRNA"/>
</dbReference>
<dbReference type="RefSeq" id="NP_446334.1">
    <property type="nucleotide sequence ID" value="NM_053882.1"/>
</dbReference>
<dbReference type="FunCoup" id="Q62894">
    <property type="interactions" value="277"/>
</dbReference>
<dbReference type="STRING" id="10116.ENSRNOP00000028740"/>
<dbReference type="GlyCosmos" id="Q62894">
    <property type="glycosylation" value="3 sites, No reported glycans"/>
</dbReference>
<dbReference type="GlyGen" id="Q62894">
    <property type="glycosylation" value="3 sites"/>
</dbReference>
<dbReference type="iPTMnet" id="Q62894"/>
<dbReference type="PhosphoSitePlus" id="Q62894"/>
<dbReference type="PaxDb" id="10116-ENSRNOP00000028740"/>
<dbReference type="GeneID" id="116662"/>
<dbReference type="KEGG" id="rno:116662"/>
<dbReference type="UCSC" id="RGD:620357">
    <property type="organism name" value="rat"/>
</dbReference>
<dbReference type="AGR" id="RGD:620357"/>
<dbReference type="CTD" id="1893"/>
<dbReference type="RGD" id="620357">
    <property type="gene designation" value="Ecm1"/>
</dbReference>
<dbReference type="VEuPathDB" id="HostDB:ENSRNOG00000021166"/>
<dbReference type="eggNOG" id="ENOG502RY3T">
    <property type="taxonomic scope" value="Eukaryota"/>
</dbReference>
<dbReference type="HOGENOM" id="CLU_038587_0_0_1"/>
<dbReference type="InParanoid" id="Q62894"/>
<dbReference type="OrthoDB" id="9889855at2759"/>
<dbReference type="PhylomeDB" id="Q62894"/>
<dbReference type="TreeFam" id="TF330786"/>
<dbReference type="Reactome" id="R-RNO-114608">
    <property type="pathway name" value="Platelet degranulation"/>
</dbReference>
<dbReference type="PRO" id="PR:Q62894"/>
<dbReference type="Proteomes" id="UP000002494">
    <property type="component" value="Chromosome 2"/>
</dbReference>
<dbReference type="Bgee" id="ENSRNOG00000021166">
    <property type="expression patterns" value="Expressed in esophagus and 18 other cell types or tissues"/>
</dbReference>
<dbReference type="GO" id="GO:0062023">
    <property type="term" value="C:collagen-containing extracellular matrix"/>
    <property type="evidence" value="ECO:0000318"/>
    <property type="project" value="GO_Central"/>
</dbReference>
<dbReference type="GO" id="GO:0005615">
    <property type="term" value="C:extracellular space"/>
    <property type="evidence" value="ECO:0000266"/>
    <property type="project" value="RGD"/>
</dbReference>
<dbReference type="GO" id="GO:0005134">
    <property type="term" value="F:interleukin-2 receptor binding"/>
    <property type="evidence" value="ECO:0000266"/>
    <property type="project" value="RGD"/>
</dbReference>
<dbReference type="GO" id="GO:0002020">
    <property type="term" value="F:protease binding"/>
    <property type="evidence" value="ECO:0000266"/>
    <property type="project" value="RGD"/>
</dbReference>
<dbReference type="GO" id="GO:0001525">
    <property type="term" value="P:angiogenesis"/>
    <property type="evidence" value="ECO:0007669"/>
    <property type="project" value="UniProtKB-KW"/>
</dbReference>
<dbReference type="GO" id="GO:0031214">
    <property type="term" value="P:biomineral tissue development"/>
    <property type="evidence" value="ECO:0007669"/>
    <property type="project" value="UniProtKB-KW"/>
</dbReference>
<dbReference type="GO" id="GO:0002063">
    <property type="term" value="P:chondrocyte development"/>
    <property type="evidence" value="ECO:0000266"/>
    <property type="project" value="RGD"/>
</dbReference>
<dbReference type="GO" id="GO:0003416">
    <property type="term" value="P:endochondral bone growth"/>
    <property type="evidence" value="ECO:0000266"/>
    <property type="project" value="RGD"/>
</dbReference>
<dbReference type="GO" id="GO:0006954">
    <property type="term" value="P:inflammatory response"/>
    <property type="evidence" value="ECO:0000266"/>
    <property type="project" value="RGD"/>
</dbReference>
<dbReference type="GO" id="GO:0030502">
    <property type="term" value="P:negative regulation of bone mineralization"/>
    <property type="evidence" value="ECO:0000250"/>
    <property type="project" value="UniProtKB"/>
</dbReference>
<dbReference type="GO" id="GO:0001960">
    <property type="term" value="P:negative regulation of cytokine-mediated signaling pathway"/>
    <property type="evidence" value="ECO:0000266"/>
    <property type="project" value="RGD"/>
</dbReference>
<dbReference type="GO" id="GO:0010466">
    <property type="term" value="P:negative regulation of peptidase activity"/>
    <property type="evidence" value="ECO:0000250"/>
    <property type="project" value="UniProtKB"/>
</dbReference>
<dbReference type="GO" id="GO:0001503">
    <property type="term" value="P:ossification"/>
    <property type="evidence" value="ECO:0007669"/>
    <property type="project" value="UniProtKB-KW"/>
</dbReference>
<dbReference type="GO" id="GO:0045766">
    <property type="term" value="P:positive regulation of angiogenesis"/>
    <property type="evidence" value="ECO:0000250"/>
    <property type="project" value="UniProtKB"/>
</dbReference>
<dbReference type="GO" id="GO:0001938">
    <property type="term" value="P:positive regulation of endothelial cell proliferation"/>
    <property type="evidence" value="ECO:0000250"/>
    <property type="project" value="UniProtKB"/>
</dbReference>
<dbReference type="GO" id="GO:0030500">
    <property type="term" value="P:regulation of bone mineralization"/>
    <property type="evidence" value="ECO:0000266"/>
    <property type="project" value="RGD"/>
</dbReference>
<dbReference type="GO" id="GO:2000404">
    <property type="term" value="P:regulation of T cell migration"/>
    <property type="evidence" value="ECO:0000266"/>
    <property type="project" value="RGD"/>
</dbReference>
<dbReference type="GO" id="GO:0006357">
    <property type="term" value="P:regulation of transcription by RNA polymerase II"/>
    <property type="evidence" value="ECO:0000266"/>
    <property type="project" value="RGD"/>
</dbReference>
<dbReference type="GO" id="GO:0002828">
    <property type="term" value="P:regulation of type 2 immune response"/>
    <property type="evidence" value="ECO:0000266"/>
    <property type="project" value="RGD"/>
</dbReference>
<dbReference type="GO" id="GO:0007165">
    <property type="term" value="P:signal transduction"/>
    <property type="evidence" value="ECO:0007669"/>
    <property type="project" value="InterPro"/>
</dbReference>
<dbReference type="FunFam" id="1.10.246.10:FF:000006">
    <property type="entry name" value="Extracellular matrix protein 1"/>
    <property type="match status" value="1"/>
</dbReference>
<dbReference type="Gene3D" id="1.10.246.10">
    <property type="match status" value="2"/>
</dbReference>
<dbReference type="InterPro" id="IPR008605">
    <property type="entry name" value="ECM1"/>
</dbReference>
<dbReference type="InterPro" id="IPR020858">
    <property type="entry name" value="Serum_albumin-like"/>
</dbReference>
<dbReference type="PANTHER" id="PTHR16776">
    <property type="entry name" value="EXTRACELLULAR MATRIX PROTEIN 1"/>
    <property type="match status" value="1"/>
</dbReference>
<dbReference type="PANTHER" id="PTHR16776:SF3">
    <property type="entry name" value="EXTRACELLULAR MATRIX PROTEIN 1"/>
    <property type="match status" value="1"/>
</dbReference>
<dbReference type="Pfam" id="PF05782">
    <property type="entry name" value="ECM1"/>
    <property type="match status" value="1"/>
</dbReference>
<dbReference type="SUPFAM" id="SSF48552">
    <property type="entry name" value="Serum albumin-like"/>
    <property type="match status" value="2"/>
</dbReference>
<protein>
    <recommendedName>
        <fullName>Extracellular matrix protein 1</fullName>
    </recommendedName>
    <alternativeName>
        <fullName>Secretory component p85</fullName>
    </alternativeName>
</protein>
<accession>Q62894</accession>
<accession>Q5U2S9</accession>
<name>ECM1_RAT</name>
<comment type="function">
    <text evidence="1">Involved in endochondral bone formation as negative regulator of bone mineralization. Stimulates the proliferation of endothelial cells and promotes angiogenesis. Inhibits MMP9 proteolytic activity (By similarity).</text>
</comment>
<comment type="subunit">
    <text evidence="1">Interacts (via C-terminus) with HSPG2 (via C-terminus). Interacts with EFEMP1/FBLN3 and LAMB3. Interacts with MMP9.</text>
</comment>
<comment type="subcellular location">
    <subcellularLocation>
        <location>Secreted</location>
        <location>Extracellular space</location>
        <location>Extracellular matrix</location>
    </subcellularLocation>
</comment>
<sequence length="562" mass="63249">MGTIRSSALILACLALASAASEGAFKVSDQREMKPEHLFQHLHEVGYAAPPSPPQTRRLQVHHSETSPHDPPLFEEQKEVQPPSSPEDIPVYEEEWLTFLNPNVGKVDPALPQEAIPLQKEQPPPRIPIEQKEIDPPVQHQEEIVQSRQKEEKPPTLTGQHPPEPRTWNPARHCQQGRRGIWGHRLDGFPPGRPSPDNLKQICLPERQHVVYGPWNLPQTGYSHLSRQGEALNLLETGYSRCCRCRSDTNRLDCVKLVWEDAMTQFCEAEFSVKTRPHLCCKQRGEERFSCFQKEAPRPDYLLRPCPIHQTGISSGTQLPFPPGLPTPDNVKNICLLRRFRSVPRNLPATDAIQRQLQALTRLETEFQRCCRQGHNHTCTWKAWEDTLDGYCDRELAIKTHPHSCCHYPPSPARDECFAHLAPYPNYDRDLLTVDLSRVTPNLMDHLCGNGRVLSKHKQIPGLIQNMTVRCCELPYPEQACCGEEEKLAFIEDLCGPRRNSWKDPALCCTLSPGDKQANCFNTNYLRNVALVAGDTGNATGLGQQGPTGGTNVGPAPGSKEE</sequence>
<gene>
    <name type="primary">Ecm1</name>
</gene>
<feature type="signal peptide" evidence="4">
    <location>
        <begin position="1"/>
        <end position="19"/>
    </location>
</feature>
<feature type="chain" id="PRO_0000043411" description="Extracellular matrix protein 1">
    <location>
        <begin position="20"/>
        <end position="562"/>
    </location>
</feature>
<feature type="repeat" description="1">
    <location>
        <begin position="172"/>
        <end position="301"/>
    </location>
</feature>
<feature type="repeat" description="2">
    <location>
        <begin position="305"/>
        <end position="427"/>
    </location>
</feature>
<feature type="region of interest" description="Disordered" evidence="3">
    <location>
        <begin position="46"/>
        <end position="87"/>
    </location>
</feature>
<feature type="region of interest" description="Disordered" evidence="3">
    <location>
        <begin position="119"/>
        <end position="171"/>
    </location>
</feature>
<feature type="region of interest" description="2 X approximate repeats">
    <location>
        <begin position="172"/>
        <end position="427"/>
    </location>
</feature>
<feature type="region of interest" description="Disordered" evidence="3">
    <location>
        <begin position="539"/>
        <end position="562"/>
    </location>
</feature>
<feature type="compositionally biased region" description="Basic and acidic residues" evidence="3">
    <location>
        <begin position="129"/>
        <end position="154"/>
    </location>
</feature>
<feature type="compositionally biased region" description="Gly residues" evidence="3">
    <location>
        <begin position="543"/>
        <end position="552"/>
    </location>
</feature>
<feature type="modified residue" description="Phosphoserine" evidence="5">
    <location>
        <position position="559"/>
    </location>
</feature>
<feature type="glycosylation site" description="N-linked (GlcNAc...) asparagine" evidence="2">
    <location>
        <position position="376"/>
    </location>
</feature>
<feature type="glycosylation site" description="N-linked (GlcNAc...) asparagine" evidence="2">
    <location>
        <position position="466"/>
    </location>
</feature>
<feature type="glycosylation site" description="N-linked (GlcNAc...) asparagine" evidence="2">
    <location>
        <position position="538"/>
    </location>
</feature>